<protein>
    <recommendedName>
        <fullName>Creatine kinase B-type</fullName>
        <ecNumber>2.7.3.2</ecNumber>
    </recommendedName>
    <alternativeName>
        <fullName>B-CK</fullName>
    </alternativeName>
    <alternativeName>
        <fullName>Creatine kinase B chain</fullName>
    </alternativeName>
    <alternativeName>
        <fullName>Creatine phosphokinase M-type</fullName>
        <shortName>CPK-B</shortName>
    </alternativeName>
</protein>
<sequence length="381" mass="42725">MPFSNSHNTQKLRFPAEDEFPDLSSHNNHMAKVLTPELYAELRAKCTPSGFTLDDAIQTGVDNPGHPYIMTVGAVAGDEESYDVFKDLFDPIIEDRHGGYQPSDEHKTDLNPDNLQGGDDLDPNYVLSSRVRTGRSIRGFCLPPHCSRGERRAIEKLAVEALSSLDGDLSGRYYALKSMTEAEQQQLIDDHFLFDKPVSPLLLASGMARDWPDARGIWHNDNKTFLVWINEEDHLRVISMQKGGNMKEVFTRFCTGLTQIETLFKSKNYEFMWNPHLGYILTCPSNLGTGLRAGVHIKLPHLGKHEKFSEVLKRLRLQKRGTGGVDTAAVGGVFDVSNADRLGFSEVELVQMVVDGVKLLIEMEQRLEQGQPIDDLMPAQK</sequence>
<evidence type="ECO:0000250" key="1">
    <source>
        <dbReference type="UniProtKB" id="P12277"/>
    </source>
</evidence>
<evidence type="ECO:0000250" key="2">
    <source>
        <dbReference type="UniProtKB" id="Q04447"/>
    </source>
</evidence>
<evidence type="ECO:0000255" key="3">
    <source>
        <dbReference type="PROSITE-ProRule" id="PRU00842"/>
    </source>
</evidence>
<evidence type="ECO:0000255" key="4">
    <source>
        <dbReference type="PROSITE-ProRule" id="PRU00843"/>
    </source>
</evidence>
<evidence type="ECO:0000255" key="5">
    <source>
        <dbReference type="PROSITE-ProRule" id="PRU10029"/>
    </source>
</evidence>
<evidence type="ECO:0000256" key="6">
    <source>
        <dbReference type="SAM" id="MobiDB-lite"/>
    </source>
</evidence>
<evidence type="ECO:0000269" key="7">
    <source>
    </source>
</evidence>
<evidence type="ECO:0000305" key="8"/>
<evidence type="ECO:0007744" key="9">
    <source>
    </source>
</evidence>
<proteinExistence type="evidence at protein level"/>
<organism>
    <name type="scientific">Rattus norvegicus</name>
    <name type="common">Rat</name>
    <dbReference type="NCBI Taxonomy" id="10116"/>
    <lineage>
        <taxon>Eukaryota</taxon>
        <taxon>Metazoa</taxon>
        <taxon>Chordata</taxon>
        <taxon>Craniata</taxon>
        <taxon>Vertebrata</taxon>
        <taxon>Euteleostomi</taxon>
        <taxon>Mammalia</taxon>
        <taxon>Eutheria</taxon>
        <taxon>Euarchontoglires</taxon>
        <taxon>Glires</taxon>
        <taxon>Rodentia</taxon>
        <taxon>Myomorpha</taxon>
        <taxon>Muroidea</taxon>
        <taxon>Muridae</taxon>
        <taxon>Murinae</taxon>
        <taxon>Rattus</taxon>
    </lineage>
</organism>
<comment type="function">
    <text evidence="2">Reversibly catalyzes the transfer of phosphate between ATP and various phosphogens (e.g. creatine phosphate). Creatine kinase isoenzymes play a central role in energy transduction in tissues with large, fluctuating energy demands, such as skeletal muscle, heart, brain and spermatozoa. Acts as a key regulator of adaptive thermogenesis as part of the futile creatine cycle: localizes to the mitochondria of thermogenic fat cells and acts by mediating phosphorylation of creatine to initiate a futile cycle of creatine phosphorylation and dephosphorylation. During the futile creatine cycle, creatine and N-phosphocreatine are in a futile cycle, which dissipates the high energy charge of N-phosphocreatine as heat without performing any mechanical or chemical work.</text>
</comment>
<comment type="catalytic activity">
    <reaction evidence="2 5">
        <text>creatine + ATP = N-phosphocreatine + ADP + H(+)</text>
        <dbReference type="Rhea" id="RHEA:17157"/>
        <dbReference type="ChEBI" id="CHEBI:15378"/>
        <dbReference type="ChEBI" id="CHEBI:30616"/>
        <dbReference type="ChEBI" id="CHEBI:57947"/>
        <dbReference type="ChEBI" id="CHEBI:58092"/>
        <dbReference type="ChEBI" id="CHEBI:456216"/>
        <dbReference type="EC" id="2.7.3.2"/>
    </reaction>
    <physiologicalReaction direction="left-to-right" evidence="2">
        <dbReference type="Rhea" id="RHEA:17158"/>
    </physiologicalReaction>
</comment>
<comment type="subunit">
    <text evidence="1">Dimer of identical or non-identical chains, which can be either B (brain type) or M (muscle type). With MM being the major form in skeletal muscle and myocardium, MB existing in myocardium, and BB existing in many tissues, especially brain. Interacts with SLC12A6 (via C-terminus); the interaction may be required for SLC12A6 potassium-chloride cotransport activity (By similarity).</text>
</comment>
<comment type="subcellular location">
    <subcellularLocation>
        <location evidence="2">Cytoplasm</location>
        <location evidence="2">Cytosol</location>
    </subcellularLocation>
    <subcellularLocation>
        <location evidence="2">Mitochondrion</location>
    </subcellularLocation>
    <subcellularLocation>
        <location evidence="1">Cell membrane</location>
    </subcellularLocation>
    <text evidence="2">Localizes to the mitochondria of thermogenic fat cells via the internal MTS-like signal (iMTS-L) region.</text>
</comment>
<comment type="tissue specificity">
    <text evidence="7">In the kidney localized primarily in the outer medulla in the thick ascending limb and distal convoluted tubule.</text>
</comment>
<comment type="domain">
    <text evidence="2">The internal MTS-like signal (iMTS-L) mediates targeting to mitochondria thermogenic fat cells.</text>
</comment>
<comment type="PTM">
    <text evidence="1">Ubiquitinated by the ECS(ASB9) complex, leading to its degradation by the proteasome.</text>
</comment>
<comment type="similarity">
    <text evidence="3 4">Belongs to the ATP:guanido phosphotransferase family.</text>
</comment>
<comment type="sequence caution" evidence="8">
    <conflict type="erroneous initiation">
        <sequence resource="EMBL-CDS" id="AAH87656"/>
    </conflict>
</comment>
<name>KCRB_RAT</name>
<feature type="chain" id="PRO_0000211970" description="Creatine kinase B-type">
    <location>
        <begin position="1"/>
        <end position="381"/>
    </location>
</feature>
<feature type="domain" description="Phosphagen kinase N-terminal" evidence="3">
    <location>
        <begin position="11"/>
        <end position="98"/>
    </location>
</feature>
<feature type="domain" description="Phosphagen kinase C-terminal" evidence="4">
    <location>
        <begin position="125"/>
        <end position="367"/>
    </location>
</feature>
<feature type="region of interest" description="Disordered" evidence="6">
    <location>
        <begin position="96"/>
        <end position="122"/>
    </location>
</feature>
<feature type="region of interest" description="Internal MTS-like signal" evidence="2">
    <location>
        <begin position="130"/>
        <end position="138"/>
    </location>
</feature>
<feature type="compositionally biased region" description="Basic and acidic residues" evidence="6">
    <location>
        <begin position="96"/>
        <end position="110"/>
    </location>
</feature>
<feature type="binding site" evidence="1">
    <location>
        <position position="72"/>
    </location>
    <ligand>
        <name>creatine</name>
        <dbReference type="ChEBI" id="CHEBI:57947"/>
    </ligand>
</feature>
<feature type="binding site" evidence="4">
    <location>
        <begin position="128"/>
        <end position="132"/>
    </location>
    <ligand>
        <name>ATP</name>
        <dbReference type="ChEBI" id="CHEBI:30616"/>
    </ligand>
</feature>
<feature type="binding site" evidence="4">
    <location>
        <position position="130"/>
    </location>
    <ligand>
        <name>ATP</name>
        <dbReference type="ChEBI" id="CHEBI:30616"/>
    </ligand>
</feature>
<feature type="binding site" evidence="4">
    <location>
        <position position="132"/>
    </location>
    <ligand>
        <name>ATP</name>
        <dbReference type="ChEBI" id="CHEBI:30616"/>
    </ligand>
</feature>
<feature type="binding site" evidence="4">
    <location>
        <position position="191"/>
    </location>
    <ligand>
        <name>ATP</name>
        <dbReference type="ChEBI" id="CHEBI:30616"/>
    </ligand>
</feature>
<feature type="binding site" evidence="1">
    <location>
        <position position="232"/>
    </location>
    <ligand>
        <name>creatine</name>
        <dbReference type="ChEBI" id="CHEBI:57947"/>
    </ligand>
</feature>
<feature type="binding site" evidence="4">
    <location>
        <position position="236"/>
    </location>
    <ligand>
        <name>ATP</name>
        <dbReference type="ChEBI" id="CHEBI:30616"/>
    </ligand>
</feature>
<feature type="binding site" evidence="1">
    <location>
        <position position="285"/>
    </location>
    <ligand>
        <name>creatine</name>
        <dbReference type="ChEBI" id="CHEBI:57947"/>
    </ligand>
</feature>
<feature type="binding site" evidence="4">
    <location>
        <position position="292"/>
    </location>
    <ligand>
        <name>ATP</name>
        <dbReference type="ChEBI" id="CHEBI:30616"/>
    </ligand>
</feature>
<feature type="binding site" evidence="4">
    <location>
        <begin position="320"/>
        <end position="325"/>
    </location>
    <ligand>
        <name>ATP</name>
        <dbReference type="ChEBI" id="CHEBI:30616"/>
    </ligand>
</feature>
<feature type="binding site" evidence="4">
    <location>
        <position position="320"/>
    </location>
    <ligand>
        <name>ATP</name>
        <dbReference type="ChEBI" id="CHEBI:30616"/>
    </ligand>
</feature>
<feature type="binding site" evidence="4">
    <location>
        <position position="335"/>
    </location>
    <ligand>
        <name>ATP</name>
        <dbReference type="ChEBI" id="CHEBI:30616"/>
    </ligand>
</feature>
<feature type="modified residue" description="Phosphoserine" evidence="1">
    <location>
        <position position="4"/>
    </location>
</feature>
<feature type="modified residue" description="Phosphothreonine" evidence="9">
    <location>
        <position position="35"/>
    </location>
</feature>
<feature type="modified residue" description="Phosphotyrosine" evidence="2">
    <location>
        <position position="125"/>
    </location>
</feature>
<feature type="modified residue" description="Phosphoserine" evidence="1">
    <location>
        <position position="199"/>
    </location>
</feature>
<feature type="modified residue" description="3'-nitrotyrosine" evidence="2">
    <location>
        <position position="269"/>
    </location>
</feature>
<feature type="modified residue" description="Phosphoserine" evidence="9">
    <location>
        <position position="309"/>
    </location>
</feature>
<feature type="modified residue" description="Phosphothreonine" evidence="2">
    <location>
        <position position="322"/>
    </location>
</feature>
<feature type="cross-link" description="Glycyl lysine isopeptide (Lys-Gly) (interchain with G-Cter in ubiquitin)" evidence="1">
    <location>
        <position position="45"/>
    </location>
</feature>
<feature type="cross-link" description="Glycyl lysine isopeptide (Lys-Gly) (interchain with G-Cter in ubiquitin)" evidence="1">
    <location>
        <position position="107"/>
    </location>
</feature>
<feature type="cross-link" description="Glycyl lysine isopeptide (Lys-Gly) (interchain with G-Cter in ubiquitin)" evidence="1">
    <location>
        <position position="381"/>
    </location>
</feature>
<feature type="sequence conflict" description="In Ref. 3; AAA40931/AAA40933." evidence="8" ref="3">
    <original>D</original>
    <variation>A</variation>
    <location>
        <position position="18"/>
    </location>
</feature>
<feature type="sequence conflict" description="In Ref. 1; AAA40930 and 2; AAA40932." evidence="8" ref="1 2">
    <original>EQ</original>
    <variation>DE</variation>
    <location>
        <begin position="183"/>
        <end position="184"/>
    </location>
</feature>
<feature type="sequence conflict" description="In Ref. 2; AAA40932." evidence="8" ref="2">
    <original>G</original>
    <variation>A</variation>
    <location>
        <position position="206"/>
    </location>
</feature>
<reference key="1">
    <citation type="journal article" date="1985" name="Gene">
        <title>Expression of a rat brain creatine kinase-beta-galactosidase fusion protein in Escherichia coli and derivation of the complete amino acid sequence of rat brain creatine kinase.</title>
        <authorList>
            <person name="Benfield P.A."/>
            <person name="Henderson L."/>
            <person name="Pearson M.L."/>
        </authorList>
    </citation>
    <scope>NUCLEOTIDE SEQUENCE [MRNA]</scope>
</reference>
<reference key="2">
    <citation type="journal article" date="1988" name="Gene">
        <title>Isolation of four rat creatine kinase genes and identification of multiple potential promoter sequences within the rat brain creatine kinase promoter region.</title>
        <authorList>
            <person name="Benfield P.A."/>
            <person name="Graf D."/>
            <person name="Korolkoff P.N."/>
            <person name="Hobson G."/>
            <person name="Pearson M.L."/>
        </authorList>
    </citation>
    <scope>NUCLEOTIDE SEQUENCE [GENOMIC DNA]</scope>
</reference>
<reference key="3">
    <citation type="journal article" date="1990" name="Mol. Endocrinol.">
        <title>Estrogen regulation of creatine kinase-B in the rat uterus.</title>
        <authorList>
            <person name="Pentecost B.T."/>
            <person name="Mattheiss L."/>
            <person name="Dickerman H.W."/>
            <person name="Kumar S.A."/>
        </authorList>
    </citation>
    <scope>NUCLEOTIDE SEQUENCE [GENOMIC DNA / MRNA]</scope>
    <source>
        <tissue>Uterus</tissue>
    </source>
</reference>
<reference key="4">
    <citation type="journal article" date="2004" name="Genome Res.">
        <title>The status, quality, and expansion of the NIH full-length cDNA project: the Mammalian Gene Collection (MGC).</title>
        <authorList>
            <consortium name="The MGC Project Team"/>
        </authorList>
    </citation>
    <scope>NUCLEOTIDE SEQUENCE [LARGE SCALE MRNA]</scope>
    <source>
        <tissue>Brain</tissue>
        <tissue>Embryonic brain</tissue>
        <tissue>Heart</tissue>
        <tissue>Prostate</tissue>
    </source>
</reference>
<reference key="5">
    <citation type="submission" date="2007-04" db="UniProtKB">
        <authorList>
            <person name="Lubec G."/>
            <person name="Afjehi-Sadat L."/>
            <person name="Diao W."/>
            <person name="Chen W.-Q."/>
        </authorList>
    </citation>
    <scope>PROTEIN SEQUENCE OF 33-43; 87-96; 108-130; 138-148; 157-172; 224-236; 253-265 AND 320-341</scope>
    <scope>IDENTIFICATION BY MASS SPECTROMETRY</scope>
    <source>
        <strain>Sprague-Dawley</strain>
        <tissue>Hippocampus</tissue>
        <tissue>Spinal cord</tissue>
    </source>
</reference>
<reference key="6">
    <citation type="journal article" date="1984" name="Biochem. J.">
        <title>The brain isoform of a key ATP-regulating enzyme, creatine kinase, is a phosphoprotein.</title>
        <authorList>
            <person name="Mahadevan L.C."/>
            <person name="Whatley S.A."/>
            <person name="Leung T.K.C."/>
            <person name="Lim L."/>
        </authorList>
    </citation>
    <scope>PHOSPHORYLATION</scope>
</reference>
<reference key="7">
    <citation type="journal article" date="1991" name="J. Biol. Chem.">
        <title>Compartmentation of multiple forms of creatine kinase in the distal nephron of the rat kidney.</title>
        <authorList>
            <person name="Friedman D.L."/>
            <person name="Perryman M.B."/>
        </authorList>
    </citation>
    <scope>TISSUE SPECIFICITY</scope>
</reference>
<reference key="8">
    <citation type="journal article" date="2012" name="Nat. Commun.">
        <title>Quantitative maps of protein phosphorylation sites across 14 different rat organs and tissues.</title>
        <authorList>
            <person name="Lundby A."/>
            <person name="Secher A."/>
            <person name="Lage K."/>
            <person name="Nordsborg N.B."/>
            <person name="Dmytriyev A."/>
            <person name="Lundby C."/>
            <person name="Olsen J.V."/>
        </authorList>
    </citation>
    <scope>PHOSPHORYLATION [LARGE SCALE ANALYSIS] AT THR-35 AND SER-309</scope>
    <scope>IDENTIFICATION BY MASS SPECTROMETRY [LARGE SCALE ANALYSIS]</scope>
</reference>
<dbReference type="EC" id="2.7.3.2"/>
<dbReference type="EMBL" id="M14400">
    <property type="protein sequence ID" value="AAA40930.1"/>
    <property type="molecule type" value="mRNA"/>
</dbReference>
<dbReference type="EMBL" id="M18668">
    <property type="protein sequence ID" value="AAA40932.1"/>
    <property type="molecule type" value="Genomic_DNA"/>
</dbReference>
<dbReference type="EMBL" id="M57664">
    <property type="protein sequence ID" value="AAA40933.1"/>
    <property type="molecule type" value="mRNA"/>
</dbReference>
<dbReference type="EMBL" id="M57665">
    <property type="protein sequence ID" value="AAA40931.1"/>
    <property type="molecule type" value="Genomic_DNA"/>
</dbReference>
<dbReference type="EMBL" id="BC065307">
    <property type="protein sequence ID" value="AAH65307.2"/>
    <property type="molecule type" value="mRNA"/>
</dbReference>
<dbReference type="EMBL" id="BC070955">
    <property type="protein sequence ID" value="AAH70955.2"/>
    <property type="molecule type" value="mRNA"/>
</dbReference>
<dbReference type="EMBL" id="BC087656">
    <property type="protein sequence ID" value="AAH87656.1"/>
    <property type="status" value="ALT_INIT"/>
    <property type="molecule type" value="mRNA"/>
</dbReference>
<dbReference type="EMBL" id="BC099814">
    <property type="protein sequence ID" value="AAH99814.2"/>
    <property type="molecule type" value="mRNA"/>
</dbReference>
<dbReference type="EMBL" id="BC127477">
    <property type="protein sequence ID" value="AAI27478.2"/>
    <property type="molecule type" value="mRNA"/>
</dbReference>
<dbReference type="PIR" id="A23980">
    <property type="entry name" value="KIRTCB"/>
</dbReference>
<dbReference type="RefSeq" id="NP_036661.3">
    <property type="nucleotide sequence ID" value="NM_012529.3"/>
</dbReference>
<dbReference type="SMR" id="P07335"/>
<dbReference type="BioGRID" id="246448">
    <property type="interactions" value="4"/>
</dbReference>
<dbReference type="CORUM" id="P07335"/>
<dbReference type="FunCoup" id="P07335">
    <property type="interactions" value="958"/>
</dbReference>
<dbReference type="IntAct" id="P07335">
    <property type="interactions" value="3"/>
</dbReference>
<dbReference type="MINT" id="P07335"/>
<dbReference type="STRING" id="10116.ENSRNOP00000015122"/>
<dbReference type="ChEMBL" id="CHEMBL2176812"/>
<dbReference type="MoonProt" id="P07335"/>
<dbReference type="CarbonylDB" id="P07335"/>
<dbReference type="GlyGen" id="P07335">
    <property type="glycosylation" value="1 site, 1 O-linked glycan (1 site)"/>
</dbReference>
<dbReference type="iPTMnet" id="P07335"/>
<dbReference type="PhosphoSitePlus" id="P07335"/>
<dbReference type="SwissPalm" id="P07335"/>
<dbReference type="jPOST" id="P07335"/>
<dbReference type="PaxDb" id="10116-ENSRNOP00000015122"/>
<dbReference type="GeneID" id="24264"/>
<dbReference type="KEGG" id="rno:24264"/>
<dbReference type="UCSC" id="RGD:2357">
    <property type="organism name" value="rat"/>
</dbReference>
<dbReference type="AGR" id="RGD:2357"/>
<dbReference type="CTD" id="1152"/>
<dbReference type="RGD" id="2357">
    <property type="gene designation" value="Ckb"/>
</dbReference>
<dbReference type="VEuPathDB" id="HostDB:ENSRNOG00000010872"/>
<dbReference type="eggNOG" id="KOG3581">
    <property type="taxonomic scope" value="Eukaryota"/>
</dbReference>
<dbReference type="HOGENOM" id="CLU_019868_4_2_1"/>
<dbReference type="InParanoid" id="P07335"/>
<dbReference type="OrthoDB" id="12784at9989"/>
<dbReference type="PhylomeDB" id="P07335"/>
<dbReference type="TreeFam" id="TF314214"/>
<dbReference type="BRENDA" id="2.7.3.2">
    <property type="organism ID" value="5301"/>
</dbReference>
<dbReference type="Reactome" id="R-RNO-71288">
    <property type="pathway name" value="Creatine metabolism"/>
</dbReference>
<dbReference type="Reactome" id="R-RNO-9696264">
    <property type="pathway name" value="RND3 GTPase cycle"/>
</dbReference>
<dbReference type="PRO" id="PR:P07335"/>
<dbReference type="Proteomes" id="UP000002494">
    <property type="component" value="Chromosome 6"/>
</dbReference>
<dbReference type="Bgee" id="ENSRNOG00000010872">
    <property type="expression patterns" value="Expressed in cerebellum and 20 other cell types or tissues"/>
</dbReference>
<dbReference type="GO" id="GO:0005829">
    <property type="term" value="C:cytosol"/>
    <property type="evidence" value="ECO:0007669"/>
    <property type="project" value="UniProtKB-SubCell"/>
</dbReference>
<dbReference type="GO" id="GO:0030425">
    <property type="term" value="C:dendrite"/>
    <property type="evidence" value="ECO:0000314"/>
    <property type="project" value="RGD"/>
</dbReference>
<dbReference type="GO" id="GO:0005615">
    <property type="term" value="C:extracellular space"/>
    <property type="evidence" value="ECO:0000318"/>
    <property type="project" value="GO_Central"/>
</dbReference>
<dbReference type="GO" id="GO:0005739">
    <property type="term" value="C:mitochondrion"/>
    <property type="evidence" value="ECO:0000250"/>
    <property type="project" value="UniProtKB"/>
</dbReference>
<dbReference type="GO" id="GO:0043025">
    <property type="term" value="C:neuronal cell body"/>
    <property type="evidence" value="ECO:0000314"/>
    <property type="project" value="RGD"/>
</dbReference>
<dbReference type="GO" id="GO:0005886">
    <property type="term" value="C:plasma membrane"/>
    <property type="evidence" value="ECO:0007669"/>
    <property type="project" value="UniProtKB-SubCell"/>
</dbReference>
<dbReference type="GO" id="GO:0005524">
    <property type="term" value="F:ATP binding"/>
    <property type="evidence" value="ECO:0007669"/>
    <property type="project" value="UniProtKB-KW"/>
</dbReference>
<dbReference type="GO" id="GO:0004111">
    <property type="term" value="F:creatine kinase activity"/>
    <property type="evidence" value="ECO:0000250"/>
    <property type="project" value="UniProtKB"/>
</dbReference>
<dbReference type="GO" id="GO:0031625">
    <property type="term" value="F:ubiquitin protein ligase binding"/>
    <property type="evidence" value="ECO:0000266"/>
    <property type="project" value="RGD"/>
</dbReference>
<dbReference type="GO" id="GO:0071391">
    <property type="term" value="P:cellular response to estrogen stimulus"/>
    <property type="evidence" value="ECO:0000270"/>
    <property type="project" value="RGD"/>
</dbReference>
<dbReference type="GO" id="GO:1904568">
    <property type="term" value="P:cellular response to wortmannin"/>
    <property type="evidence" value="ECO:0000270"/>
    <property type="project" value="RGD"/>
</dbReference>
<dbReference type="GO" id="GO:0021549">
    <property type="term" value="P:cerebellum development"/>
    <property type="evidence" value="ECO:0000270"/>
    <property type="project" value="RGD"/>
</dbReference>
<dbReference type="GO" id="GO:0140651">
    <property type="term" value="P:futile creatine cycle"/>
    <property type="evidence" value="ECO:0000266"/>
    <property type="project" value="RGD"/>
</dbReference>
<dbReference type="GO" id="GO:0030644">
    <property type="term" value="P:intracellular chloride ion homeostasis"/>
    <property type="evidence" value="ECO:0000315"/>
    <property type="project" value="RGD"/>
</dbReference>
<dbReference type="GO" id="GO:0046314">
    <property type="term" value="P:phosphocreatine biosynthetic process"/>
    <property type="evidence" value="ECO:0000266"/>
    <property type="project" value="RGD"/>
</dbReference>
<dbReference type="CDD" id="cd00716">
    <property type="entry name" value="creatine_kinase_like"/>
    <property type="match status" value="1"/>
</dbReference>
<dbReference type="FunFam" id="3.30.590.10:FF:000026">
    <property type="entry name" value="Creatine kinase B-type"/>
    <property type="match status" value="1"/>
</dbReference>
<dbReference type="FunFam" id="1.10.135.10:FF:000001">
    <property type="entry name" value="Creatine kinase M-type"/>
    <property type="match status" value="1"/>
</dbReference>
<dbReference type="Gene3D" id="1.10.135.10">
    <property type="entry name" value="ATP:guanido phosphotransferase, N-terminal domain"/>
    <property type="match status" value="1"/>
</dbReference>
<dbReference type="Gene3D" id="3.30.590.10">
    <property type="entry name" value="Glutamine synthetase/guanido kinase, catalytic domain"/>
    <property type="match status" value="1"/>
</dbReference>
<dbReference type="InterPro" id="IPR000749">
    <property type="entry name" value="ATP-guanido_PTrfase"/>
</dbReference>
<dbReference type="InterPro" id="IPR022415">
    <property type="entry name" value="ATP-guanido_PTrfase_AS"/>
</dbReference>
<dbReference type="InterPro" id="IPR022414">
    <property type="entry name" value="ATP-guanido_PTrfase_cat"/>
</dbReference>
<dbReference type="InterPro" id="IPR022413">
    <property type="entry name" value="ATP-guanido_PTrfase_N"/>
</dbReference>
<dbReference type="InterPro" id="IPR036802">
    <property type="entry name" value="ATP-guanido_PTrfase_N_sf"/>
</dbReference>
<dbReference type="InterPro" id="IPR014746">
    <property type="entry name" value="Gln_synth/guanido_kin_cat_dom"/>
</dbReference>
<dbReference type="PANTHER" id="PTHR11547">
    <property type="entry name" value="ARGININE OR CREATINE KINASE"/>
    <property type="match status" value="1"/>
</dbReference>
<dbReference type="PANTHER" id="PTHR11547:SF23">
    <property type="entry name" value="CREATINE KINASE B-TYPE"/>
    <property type="match status" value="1"/>
</dbReference>
<dbReference type="Pfam" id="PF00217">
    <property type="entry name" value="ATP-gua_Ptrans"/>
    <property type="match status" value="1"/>
</dbReference>
<dbReference type="Pfam" id="PF02807">
    <property type="entry name" value="ATP-gua_PtransN"/>
    <property type="match status" value="1"/>
</dbReference>
<dbReference type="SUPFAM" id="SSF55931">
    <property type="entry name" value="Glutamine synthetase/guanido kinase"/>
    <property type="match status" value="1"/>
</dbReference>
<dbReference type="SUPFAM" id="SSF48034">
    <property type="entry name" value="Guanido kinase N-terminal domain"/>
    <property type="match status" value="1"/>
</dbReference>
<dbReference type="PROSITE" id="PS00112">
    <property type="entry name" value="PHOSPHAGEN_KINASE"/>
    <property type="match status" value="1"/>
</dbReference>
<dbReference type="PROSITE" id="PS51510">
    <property type="entry name" value="PHOSPHAGEN_KINASE_C"/>
    <property type="match status" value="1"/>
</dbReference>
<dbReference type="PROSITE" id="PS51509">
    <property type="entry name" value="PHOSPHAGEN_KINASE_N"/>
    <property type="match status" value="1"/>
</dbReference>
<gene>
    <name type="primary">Ckb</name>
    <name type="synonym">Ckbb</name>
</gene>
<accession>P07335</accession>
<accession>A0JPK7</accession>
<accession>Q499P7</accession>
<accession>Q5PPJ5</accession>
<accession>Q6IRE0</accession>
<accession>Q6P139</accession>
<keyword id="KW-0067">ATP-binding</keyword>
<keyword id="KW-1003">Cell membrane</keyword>
<keyword id="KW-0963">Cytoplasm</keyword>
<keyword id="KW-0903">Direct protein sequencing</keyword>
<keyword id="KW-1017">Isopeptide bond</keyword>
<keyword id="KW-0418">Kinase</keyword>
<keyword id="KW-0472">Membrane</keyword>
<keyword id="KW-0496">Mitochondrion</keyword>
<keyword id="KW-0944">Nitration</keyword>
<keyword id="KW-0547">Nucleotide-binding</keyword>
<keyword id="KW-0597">Phosphoprotein</keyword>
<keyword id="KW-1185">Reference proteome</keyword>
<keyword id="KW-0808">Transferase</keyword>
<keyword id="KW-0832">Ubl conjugation</keyword>